<comment type="subunit">
    <text evidence="1">Part of the 50S ribosomal subunit.</text>
</comment>
<comment type="similarity">
    <text evidence="1">Belongs to the universal ribosomal protein uL30 family.</text>
</comment>
<gene>
    <name evidence="1" type="primary">rpmD</name>
    <name type="ordered locus">Bcenmc03_0345</name>
</gene>
<proteinExistence type="inferred from homology"/>
<reference key="1">
    <citation type="submission" date="2008-02" db="EMBL/GenBank/DDBJ databases">
        <title>Complete sequence of chromosome 1 of Burkholderia cenocepacia MC0-3.</title>
        <authorList>
            <person name="Copeland A."/>
            <person name="Lucas S."/>
            <person name="Lapidus A."/>
            <person name="Barry K."/>
            <person name="Bruce D."/>
            <person name="Goodwin L."/>
            <person name="Glavina del Rio T."/>
            <person name="Dalin E."/>
            <person name="Tice H."/>
            <person name="Pitluck S."/>
            <person name="Chain P."/>
            <person name="Malfatti S."/>
            <person name="Shin M."/>
            <person name="Vergez L."/>
            <person name="Schmutz J."/>
            <person name="Larimer F."/>
            <person name="Land M."/>
            <person name="Hauser L."/>
            <person name="Kyrpides N."/>
            <person name="Mikhailova N."/>
            <person name="Tiedje J."/>
            <person name="Richardson P."/>
        </authorList>
    </citation>
    <scope>NUCLEOTIDE SEQUENCE [LARGE SCALE GENOMIC DNA]</scope>
    <source>
        <strain>MC0-3</strain>
    </source>
</reference>
<evidence type="ECO:0000255" key="1">
    <source>
        <dbReference type="HAMAP-Rule" id="MF_01371"/>
    </source>
</evidence>
<evidence type="ECO:0000305" key="2"/>
<name>RL30_BURO0</name>
<organism>
    <name type="scientific">Burkholderia orbicola (strain MC0-3)</name>
    <dbReference type="NCBI Taxonomy" id="406425"/>
    <lineage>
        <taxon>Bacteria</taxon>
        <taxon>Pseudomonadati</taxon>
        <taxon>Pseudomonadota</taxon>
        <taxon>Betaproteobacteria</taxon>
        <taxon>Burkholderiales</taxon>
        <taxon>Burkholderiaceae</taxon>
        <taxon>Burkholderia</taxon>
        <taxon>Burkholderia cepacia complex</taxon>
        <taxon>Burkholderia orbicola</taxon>
    </lineage>
</organism>
<keyword id="KW-0687">Ribonucleoprotein</keyword>
<keyword id="KW-0689">Ribosomal protein</keyword>
<accession>B1JU40</accession>
<protein>
    <recommendedName>
        <fullName evidence="1">Large ribosomal subunit protein uL30</fullName>
    </recommendedName>
    <alternativeName>
        <fullName evidence="2">50S ribosomal protein L30</fullName>
    </alternativeName>
</protein>
<feature type="chain" id="PRO_1000144656" description="Large ribosomal subunit protein uL30">
    <location>
        <begin position="1"/>
        <end position="60"/>
    </location>
</feature>
<dbReference type="EMBL" id="CP000958">
    <property type="protein sequence ID" value="ACA89525.1"/>
    <property type="molecule type" value="Genomic_DNA"/>
</dbReference>
<dbReference type="RefSeq" id="WP_006400644.1">
    <property type="nucleotide sequence ID" value="NC_010508.1"/>
</dbReference>
<dbReference type="SMR" id="B1JU40"/>
<dbReference type="GeneID" id="98107142"/>
<dbReference type="KEGG" id="bcm:Bcenmc03_0345"/>
<dbReference type="HOGENOM" id="CLU_131047_1_4_4"/>
<dbReference type="Proteomes" id="UP000002169">
    <property type="component" value="Chromosome 1"/>
</dbReference>
<dbReference type="GO" id="GO:0022625">
    <property type="term" value="C:cytosolic large ribosomal subunit"/>
    <property type="evidence" value="ECO:0007669"/>
    <property type="project" value="TreeGrafter"/>
</dbReference>
<dbReference type="GO" id="GO:0003735">
    <property type="term" value="F:structural constituent of ribosome"/>
    <property type="evidence" value="ECO:0007669"/>
    <property type="project" value="InterPro"/>
</dbReference>
<dbReference type="GO" id="GO:0006412">
    <property type="term" value="P:translation"/>
    <property type="evidence" value="ECO:0007669"/>
    <property type="project" value="UniProtKB-UniRule"/>
</dbReference>
<dbReference type="CDD" id="cd01658">
    <property type="entry name" value="Ribosomal_L30"/>
    <property type="match status" value="1"/>
</dbReference>
<dbReference type="FunFam" id="3.30.1390.20:FF:000001">
    <property type="entry name" value="50S ribosomal protein L30"/>
    <property type="match status" value="1"/>
</dbReference>
<dbReference type="Gene3D" id="3.30.1390.20">
    <property type="entry name" value="Ribosomal protein L30, ferredoxin-like fold domain"/>
    <property type="match status" value="1"/>
</dbReference>
<dbReference type="HAMAP" id="MF_01371_B">
    <property type="entry name" value="Ribosomal_uL30_B"/>
    <property type="match status" value="1"/>
</dbReference>
<dbReference type="InterPro" id="IPR036919">
    <property type="entry name" value="Ribo_uL30_ferredoxin-like_sf"/>
</dbReference>
<dbReference type="InterPro" id="IPR005996">
    <property type="entry name" value="Ribosomal_uL30_bac-type"/>
</dbReference>
<dbReference type="InterPro" id="IPR016082">
    <property type="entry name" value="Ribosomal_uL30_ferredoxin-like"/>
</dbReference>
<dbReference type="NCBIfam" id="TIGR01308">
    <property type="entry name" value="rpmD_bact"/>
    <property type="match status" value="1"/>
</dbReference>
<dbReference type="PANTHER" id="PTHR15892:SF2">
    <property type="entry name" value="LARGE RIBOSOMAL SUBUNIT PROTEIN UL30M"/>
    <property type="match status" value="1"/>
</dbReference>
<dbReference type="PANTHER" id="PTHR15892">
    <property type="entry name" value="MITOCHONDRIAL RIBOSOMAL PROTEIN L30"/>
    <property type="match status" value="1"/>
</dbReference>
<dbReference type="Pfam" id="PF00327">
    <property type="entry name" value="Ribosomal_L30"/>
    <property type="match status" value="1"/>
</dbReference>
<dbReference type="PIRSF" id="PIRSF002211">
    <property type="entry name" value="Ribosomal_L30_bac-type"/>
    <property type="match status" value="1"/>
</dbReference>
<dbReference type="SUPFAM" id="SSF55129">
    <property type="entry name" value="Ribosomal protein L30p/L7e"/>
    <property type="match status" value="1"/>
</dbReference>
<sequence>MSEKTVKVQLVKSLIGTRESHRATVRGLGLRRLNSVSELQDTPAVRGMINKVSYLVKVIA</sequence>